<sequence length="232" mass="26218">MKVLILACRVALALAREKEEFKTAGEALESISSSEESITHINKQKIEKFKIEEQQQTEDEQQDKIYTFPQPQSLVYSHTEPIPYPILPQNFLPPLQPAVMVPFLQPKVMDVPKTKETIIPKRKEMPLLQSPVVPFTESQSLTLTDLENLHLPLPLLQSLMYQIPQPVPQTPMIPPQSLLSLSQFKVLPVPQQMVPYPQRAMPVQAVLPFQEPVPDPVRGLHPVPQPLVPVIA</sequence>
<name>CASB_CAMDR</name>
<evidence type="ECO:0000250" key="1"/>
<evidence type="ECO:0000269" key="2">
    <source>
    </source>
</evidence>
<evidence type="ECO:0000305" key="3"/>
<evidence type="ECO:0000305" key="4">
    <source>
    </source>
</evidence>
<protein>
    <recommendedName>
        <fullName>Beta-casein</fullName>
    </recommendedName>
</protein>
<accession>Q9TVD0</accession>
<feature type="signal peptide" evidence="1">
    <location>
        <begin position="1"/>
        <end position="15"/>
    </location>
</feature>
<feature type="chain" id="PRO_0000004472" description="Beta-casein">
    <location>
        <begin position="16"/>
        <end position="232"/>
    </location>
</feature>
<feature type="modified residue" description="Phosphoserine" evidence="4">
    <location>
        <position position="30"/>
    </location>
</feature>
<feature type="modified residue" description="Phosphoserine" evidence="4">
    <location>
        <position position="32"/>
    </location>
</feature>
<feature type="modified residue" description="Phosphoserine" evidence="4">
    <location>
        <position position="33"/>
    </location>
</feature>
<feature type="modified residue" description="Phosphoserine" evidence="4">
    <location>
        <position position="34"/>
    </location>
</feature>
<proteinExistence type="evidence at protein level"/>
<keyword id="KW-0903">Direct protein sequencing</keyword>
<keyword id="KW-0494">Milk protein</keyword>
<keyword id="KW-0597">Phosphoprotein</keyword>
<keyword id="KW-0964">Secreted</keyword>
<keyword id="KW-0732">Signal</keyword>
<comment type="function">
    <text evidence="1">Important role in determination of the surface properties of the casein micelles.</text>
</comment>
<comment type="subcellular location">
    <subcellularLocation>
        <location>Secreted</location>
    </subcellularLocation>
</comment>
<comment type="tissue specificity">
    <text>Mammary gland specific. Secreted in milk.</text>
</comment>
<comment type="mass spectrometry" mass="24900.0" method="MALDI" evidence="2">
    <text>with 3 phosphate groups.</text>
</comment>
<comment type="similarity">
    <text evidence="3">Belongs to the beta-casein family.</text>
</comment>
<reference key="1">
    <citation type="journal article" date="1998" name="J. Dairy Res.">
        <title>Sequence analysis of Camelus dromedarius milk caseins.</title>
        <authorList>
            <person name="Kappeler S."/>
            <person name="Farah Z."/>
            <person name="Puhan Z."/>
        </authorList>
    </citation>
    <scope>NUCLEOTIDE SEQUENCE [MRNA]</scope>
    <scope>PARTIAL PROTEIN SEQUENCE</scope>
    <scope>PHOSPHORYLATION AT SER-30; SER-32; SER-33 AND SER-34</scope>
    <scope>MASS SPECTROMETRY</scope>
    <source>
        <strain>Somali</strain>
        <tissue>Mammary gland</tissue>
    </source>
</reference>
<dbReference type="EMBL" id="AJ012630">
    <property type="protein sequence ID" value="CAA10079.1"/>
    <property type="molecule type" value="mRNA"/>
</dbReference>
<dbReference type="PIR" id="A60305">
    <property type="entry name" value="A60305"/>
</dbReference>
<dbReference type="RefSeq" id="NP_001290492.1">
    <property type="nucleotide sequence ID" value="NM_001303563.1"/>
</dbReference>
<dbReference type="SMR" id="Q9TVD0"/>
<dbReference type="STRING" id="9838.ENSCDRP00005010646"/>
<dbReference type="iPTMnet" id="Q9TVD0"/>
<dbReference type="GeneID" id="105090953"/>
<dbReference type="KEGG" id="cdk:105090953"/>
<dbReference type="CTD" id="1447"/>
<dbReference type="OrthoDB" id="9838331at2759"/>
<dbReference type="GO" id="GO:0005615">
    <property type="term" value="C:extracellular space"/>
    <property type="evidence" value="ECO:0007669"/>
    <property type="project" value="TreeGrafter"/>
</dbReference>
<dbReference type="InterPro" id="IPR001588">
    <property type="entry name" value="Casein"/>
</dbReference>
<dbReference type="InterPro" id="IPR016345">
    <property type="entry name" value="Casein_beta"/>
</dbReference>
<dbReference type="PANTHER" id="PTHR11500">
    <property type="entry name" value="BETA CASEIN"/>
    <property type="match status" value="1"/>
</dbReference>
<dbReference type="PANTHER" id="PTHR11500:SF0">
    <property type="entry name" value="BETA-CASEIN"/>
    <property type="match status" value="1"/>
</dbReference>
<dbReference type="Pfam" id="PF00363">
    <property type="entry name" value="Casein"/>
    <property type="match status" value="1"/>
</dbReference>
<dbReference type="PIRSF" id="PIRSF002372">
    <property type="entry name" value="Beta-casein"/>
    <property type="match status" value="1"/>
</dbReference>
<organism>
    <name type="scientific">Camelus dromedarius</name>
    <name type="common">Dromedary</name>
    <name type="synonym">Arabian camel</name>
    <dbReference type="NCBI Taxonomy" id="9838"/>
    <lineage>
        <taxon>Eukaryota</taxon>
        <taxon>Metazoa</taxon>
        <taxon>Chordata</taxon>
        <taxon>Craniata</taxon>
        <taxon>Vertebrata</taxon>
        <taxon>Euteleostomi</taxon>
        <taxon>Mammalia</taxon>
        <taxon>Eutheria</taxon>
        <taxon>Laurasiatheria</taxon>
        <taxon>Artiodactyla</taxon>
        <taxon>Tylopoda</taxon>
        <taxon>Camelidae</taxon>
        <taxon>Camelus</taxon>
    </lineage>
</organism>
<gene>
    <name type="primary">CSN2</name>
</gene>